<comment type="function">
    <text evidence="1">The heterodimer acts as both an ATP-dependent DNA helicase and an ATP-dependent, dual-direction single-stranded exonuclease. Recognizes the chi site generating a DNA molecule suitable for the initiation of homologous recombination. The AddB subunit has 5' -&gt; 3' nuclease activity but not helicase activity.</text>
</comment>
<comment type="cofactor">
    <cofactor evidence="1">
        <name>Mg(2+)</name>
        <dbReference type="ChEBI" id="CHEBI:18420"/>
    </cofactor>
</comment>
<comment type="cofactor">
    <cofactor evidence="1">
        <name>[4Fe-4S] cluster</name>
        <dbReference type="ChEBI" id="CHEBI:49883"/>
    </cofactor>
    <text evidence="1">Binds 1 [4Fe-4S] cluster.</text>
</comment>
<comment type="subunit">
    <text evidence="1">Heterodimer of AddA and AddB.</text>
</comment>
<comment type="miscellaneous">
    <text evidence="1">Despite having conserved helicase domains, this subunit does not have helicase activity.</text>
</comment>
<comment type="similarity">
    <text evidence="1">Belongs to the helicase family. AddB/RexB type 1 subfamily.</text>
</comment>
<name>ADDB_NATTJ</name>
<reference key="1">
    <citation type="submission" date="2008-04" db="EMBL/GenBank/DDBJ databases">
        <title>Complete sequence of chromosome of Natranaerobius thermophilus JW/NM-WN-LF.</title>
        <authorList>
            <consortium name="US DOE Joint Genome Institute"/>
            <person name="Copeland A."/>
            <person name="Lucas S."/>
            <person name="Lapidus A."/>
            <person name="Glavina del Rio T."/>
            <person name="Dalin E."/>
            <person name="Tice H."/>
            <person name="Bruce D."/>
            <person name="Goodwin L."/>
            <person name="Pitluck S."/>
            <person name="Chertkov O."/>
            <person name="Brettin T."/>
            <person name="Detter J.C."/>
            <person name="Han C."/>
            <person name="Kuske C.R."/>
            <person name="Schmutz J."/>
            <person name="Larimer F."/>
            <person name="Land M."/>
            <person name="Hauser L."/>
            <person name="Kyrpides N."/>
            <person name="Lykidis A."/>
            <person name="Mesbah N.M."/>
            <person name="Wiegel J."/>
        </authorList>
    </citation>
    <scope>NUCLEOTIDE SEQUENCE [LARGE SCALE GENOMIC DNA]</scope>
    <source>
        <strain>ATCC BAA-1301 / DSM 18059 / JW/NM-WN-LF</strain>
    </source>
</reference>
<sequence>MSVKFLLGRAGSGKTSYIIDSITEQLKAAPDGDPIIFLVPEQATFQMEQAILRRSDISGFSRLHILSFQRLSQKVLEEQGGIAKADLSDTGKEMIIKNILLQRKDDLEILEKVAVKSGFSEKLSRLISEARMYEITPEMLEQISQELDLIHLKQKLQEISQVFTDYETFLQHQGYHHQEDRLSKAGQKMEGNNISFLAGSTCYIDGFSGFTPQELKLLEGLLTKCSNIELALTLPPQFTGKIDDELHLFHPTLKTYNQVWELAVNNDIEIKKSKHFPNENEEHRSASSLPRFKDNPALAHLEKEWGKNKINPYDSEPTGLSIVEGTNLRNEIDKIAREIKLLVRDHGMRYKDIAVIVRELESYEPVIKAVFNDYKIPHFLDRKEPVHHHPLVEFLRSSVETVISNWDYEPLFRMLKTGLLPISSEEIFQVENYVLAHGISGKDWKKQGKWNFIANFDLERENIAPSNRNKQYLSEINSIKGKVRDTLLEFDSKLRGINKSESLSAQFKNQEAEEDNLLSVREISTYLWELIEQLQIEYQLEEWSLEAEERKDFVEMQLHNQLWDTVIDLLDQMVTFLGEQKVTLSEYLQIIESGLANIKLGLLPATLDQVLVGTADRSRYHEIKVLFMAGVSDGLYPAKIDDDGIIDDRERITLRQHDVEFAPTTEQKLYQEQYLIYNVLTQPSQKLYLSYPAADSEGRTMSPSTIISDIQEMFPELFQEYQNDGPENDEDFRQYIIDGKKAVSNLIKLINKVGHPEKLAEDKQQLLAYLINEHPDLFYSTPEIKALDYKKSLSPLTQEVIDKLYPNKIATSVSGLESFCQCPFRHFAEQNLRLKEREYFRLEPASLGLFYHAGLKLFWDKLQENNLTWHKLKTEEREALVSEIVEVLSERLKNRILLASERYKYFKKKLHELLSRAVEVLSWYSDDKGFYPVGSEIGFGKDEPLSTLELELPSFPNKKVQLKGRIDRIDTGKKDGDLYLRVIDYKGKSKNLELRDLYYGLDLQLAAYMTVAMRNSDKLTGDQMFPGGMLYFGVENPVVPTDKPVSPAQARDKLKSTLKMRGYLIDDEEVLDLMTREDENSQDLLPYKLRTSSPGFYKNSKVLSEQEFLAVLNYTESKLVELAERVLSGEIAPYPYKDGGYSACTYCPYLAVCQFDLNYKEHKFWNVPAKGDYLSLILEEMEEVKE</sequence>
<proteinExistence type="inferred from homology"/>
<dbReference type="EC" id="3.1.-.-" evidence="1"/>
<dbReference type="EMBL" id="CP001034">
    <property type="protein sequence ID" value="ACB85428.1"/>
    <property type="molecule type" value="Genomic_DNA"/>
</dbReference>
<dbReference type="RefSeq" id="WP_012448293.1">
    <property type="nucleotide sequence ID" value="NC_010718.1"/>
</dbReference>
<dbReference type="SMR" id="B2A611"/>
<dbReference type="FunCoup" id="B2A611">
    <property type="interactions" value="5"/>
</dbReference>
<dbReference type="STRING" id="457570.Nther_1856"/>
<dbReference type="KEGG" id="nth:Nther_1856"/>
<dbReference type="eggNOG" id="COG3857">
    <property type="taxonomic scope" value="Bacteria"/>
</dbReference>
<dbReference type="HOGENOM" id="CLU_007838_0_0_9"/>
<dbReference type="InParanoid" id="B2A611"/>
<dbReference type="OrthoDB" id="9758506at2"/>
<dbReference type="Proteomes" id="UP000001683">
    <property type="component" value="Chromosome"/>
</dbReference>
<dbReference type="GO" id="GO:0051539">
    <property type="term" value="F:4 iron, 4 sulfur cluster binding"/>
    <property type="evidence" value="ECO:0007669"/>
    <property type="project" value="UniProtKB-KW"/>
</dbReference>
<dbReference type="GO" id="GO:0008409">
    <property type="term" value="F:5'-3' exonuclease activity"/>
    <property type="evidence" value="ECO:0007669"/>
    <property type="project" value="UniProtKB-UniRule"/>
</dbReference>
<dbReference type="GO" id="GO:0005524">
    <property type="term" value="F:ATP binding"/>
    <property type="evidence" value="ECO:0007669"/>
    <property type="project" value="UniProtKB-UniRule"/>
</dbReference>
<dbReference type="GO" id="GO:0003690">
    <property type="term" value="F:double-stranded DNA binding"/>
    <property type="evidence" value="ECO:0007669"/>
    <property type="project" value="UniProtKB-UniRule"/>
</dbReference>
<dbReference type="GO" id="GO:0004386">
    <property type="term" value="F:helicase activity"/>
    <property type="evidence" value="ECO:0007669"/>
    <property type="project" value="UniProtKB-KW"/>
</dbReference>
<dbReference type="GO" id="GO:0046872">
    <property type="term" value="F:metal ion binding"/>
    <property type="evidence" value="ECO:0007669"/>
    <property type="project" value="UniProtKB-KW"/>
</dbReference>
<dbReference type="GO" id="GO:0000724">
    <property type="term" value="P:double-strand break repair via homologous recombination"/>
    <property type="evidence" value="ECO:0007669"/>
    <property type="project" value="UniProtKB-UniRule"/>
</dbReference>
<dbReference type="Gene3D" id="3.90.320.10">
    <property type="match status" value="1"/>
</dbReference>
<dbReference type="Gene3D" id="3.40.50.300">
    <property type="entry name" value="P-loop containing nucleotide triphosphate hydrolases"/>
    <property type="match status" value="3"/>
</dbReference>
<dbReference type="HAMAP" id="MF_01452">
    <property type="entry name" value="AddB_type1"/>
    <property type="match status" value="1"/>
</dbReference>
<dbReference type="InterPro" id="IPR049035">
    <property type="entry name" value="ADDB_N"/>
</dbReference>
<dbReference type="InterPro" id="IPR014140">
    <property type="entry name" value="DNA_helicase_suAddB"/>
</dbReference>
<dbReference type="InterPro" id="IPR014017">
    <property type="entry name" value="DNA_helicase_UvrD-like_C"/>
</dbReference>
<dbReference type="InterPro" id="IPR027417">
    <property type="entry name" value="P-loop_NTPase"/>
</dbReference>
<dbReference type="InterPro" id="IPR011604">
    <property type="entry name" value="PDDEXK-like_dom_sf"/>
</dbReference>
<dbReference type="InterPro" id="IPR038726">
    <property type="entry name" value="PDDEXK_AddAB-type"/>
</dbReference>
<dbReference type="NCBIfam" id="TIGR02773">
    <property type="entry name" value="addB_Gpos"/>
    <property type="match status" value="1"/>
</dbReference>
<dbReference type="PANTHER" id="PTHR30591">
    <property type="entry name" value="RECBCD ENZYME SUBUNIT RECC"/>
    <property type="match status" value="1"/>
</dbReference>
<dbReference type="PANTHER" id="PTHR30591:SF1">
    <property type="entry name" value="RECBCD ENZYME SUBUNIT RECC"/>
    <property type="match status" value="1"/>
</dbReference>
<dbReference type="Pfam" id="PF21445">
    <property type="entry name" value="ADDB_N"/>
    <property type="match status" value="1"/>
</dbReference>
<dbReference type="Pfam" id="PF12705">
    <property type="entry name" value="PDDEXK_1"/>
    <property type="match status" value="1"/>
</dbReference>
<dbReference type="SUPFAM" id="SSF52540">
    <property type="entry name" value="P-loop containing nucleoside triphosphate hydrolases"/>
    <property type="match status" value="2"/>
</dbReference>
<dbReference type="PROSITE" id="PS51198">
    <property type="entry name" value="UVRD_HELICASE_ATP_BIND"/>
    <property type="match status" value="1"/>
</dbReference>
<dbReference type="PROSITE" id="PS51217">
    <property type="entry name" value="UVRD_HELICASE_CTER"/>
    <property type="match status" value="1"/>
</dbReference>
<gene>
    <name evidence="1" type="primary">addB</name>
    <name type="ordered locus">Nther_1856</name>
</gene>
<feature type="chain" id="PRO_0000379201" description="ATP-dependent helicase/deoxyribonuclease subunit B">
    <location>
        <begin position="1"/>
        <end position="1186"/>
    </location>
</feature>
<feature type="domain" description="UvrD-like helicase ATP-binding" evidence="1">
    <location>
        <begin position="1"/>
        <end position="308"/>
    </location>
</feature>
<feature type="domain" description="UvrD-like helicase C-terminal" evidence="1">
    <location>
        <begin position="288"/>
        <end position="620"/>
    </location>
</feature>
<feature type="binding site" evidence="1">
    <location>
        <begin position="8"/>
        <end position="15"/>
    </location>
    <ligand>
        <name>ATP</name>
        <dbReference type="ChEBI" id="CHEBI:30616"/>
    </ligand>
</feature>
<feature type="binding site" evidence="1">
    <location>
        <position position="822"/>
    </location>
    <ligand>
        <name>[4Fe-4S] cluster</name>
        <dbReference type="ChEBI" id="CHEBI:49883"/>
    </ligand>
</feature>
<feature type="binding site" evidence="1">
    <location>
        <position position="1144"/>
    </location>
    <ligand>
        <name>[4Fe-4S] cluster</name>
        <dbReference type="ChEBI" id="CHEBI:49883"/>
    </ligand>
</feature>
<feature type="binding site" evidence="1">
    <location>
        <position position="1147"/>
    </location>
    <ligand>
        <name>[4Fe-4S] cluster</name>
        <dbReference type="ChEBI" id="CHEBI:49883"/>
    </ligand>
</feature>
<feature type="binding site" evidence="1">
    <location>
        <position position="1153"/>
    </location>
    <ligand>
        <name>[4Fe-4S] cluster</name>
        <dbReference type="ChEBI" id="CHEBI:49883"/>
    </ligand>
</feature>
<organism>
    <name type="scientific">Natranaerobius thermophilus (strain ATCC BAA-1301 / DSM 18059 / JW/NM-WN-LF)</name>
    <dbReference type="NCBI Taxonomy" id="457570"/>
    <lineage>
        <taxon>Bacteria</taxon>
        <taxon>Bacillati</taxon>
        <taxon>Bacillota</taxon>
        <taxon>Clostridia</taxon>
        <taxon>Natranaerobiales</taxon>
        <taxon>Natranaerobiaceae</taxon>
        <taxon>Natranaerobius</taxon>
    </lineage>
</organism>
<protein>
    <recommendedName>
        <fullName evidence="1">ATP-dependent helicase/deoxyribonuclease subunit B</fullName>
        <ecNumber evidence="1">3.1.-.-</ecNumber>
    </recommendedName>
    <alternativeName>
        <fullName evidence="1">ATP-dependent helicase/nuclease subunit AddB</fullName>
    </alternativeName>
</protein>
<keyword id="KW-0004">4Fe-4S</keyword>
<keyword id="KW-0067">ATP-binding</keyword>
<keyword id="KW-0227">DNA damage</keyword>
<keyword id="KW-0234">DNA repair</keyword>
<keyword id="KW-0238">DNA-binding</keyword>
<keyword id="KW-0269">Exonuclease</keyword>
<keyword id="KW-0347">Helicase</keyword>
<keyword id="KW-0378">Hydrolase</keyword>
<keyword id="KW-0408">Iron</keyword>
<keyword id="KW-0411">Iron-sulfur</keyword>
<keyword id="KW-0479">Metal-binding</keyword>
<keyword id="KW-0540">Nuclease</keyword>
<keyword id="KW-0547">Nucleotide-binding</keyword>
<keyword id="KW-1185">Reference proteome</keyword>
<evidence type="ECO:0000255" key="1">
    <source>
        <dbReference type="HAMAP-Rule" id="MF_01452"/>
    </source>
</evidence>
<accession>B2A611</accession>